<name>XYNC_TALFU</name>
<evidence type="ECO:0000250" key="1"/>
<evidence type="ECO:0000255" key="2"/>
<evidence type="ECO:0000255" key="3">
    <source>
        <dbReference type="PROSITE-ProRule" id="PRU01097"/>
    </source>
</evidence>
<evidence type="ECO:0000255" key="4">
    <source>
        <dbReference type="PROSITE-ProRule" id="PRU10062"/>
    </source>
</evidence>
<evidence type="ECO:0000269" key="5">
    <source>
    </source>
</evidence>
<evidence type="ECO:0000269" key="6">
    <source>
    </source>
</evidence>
<evidence type="ECO:0000269" key="7">
    <source>
    </source>
</evidence>
<evidence type="ECO:0000305" key="8"/>
<evidence type="ECO:0007744" key="9">
    <source>
        <dbReference type="PDB" id="1TE1"/>
    </source>
</evidence>
<evidence type="ECO:0007829" key="10">
    <source>
        <dbReference type="PDB" id="3WP3"/>
    </source>
</evidence>
<comment type="function">
    <text>Endo-1,4-beta-xylanase involved in the hydrolysis of xylan, a major structural heterogeneous polysaccharide found in plant biomass representing the second most abundant polysaccharide in the biosphere, after cellulose.</text>
</comment>
<comment type="catalytic activity">
    <reaction evidence="5 7">
        <text>Endohydrolysis of (1-&gt;4)-beta-D-xylosidic linkages in xylans.</text>
        <dbReference type="EC" id="3.2.1.8"/>
    </reaction>
</comment>
<comment type="activity regulation">
    <text evidence="5 7">Strongly inhibited by wheat xylanase inhibiting protein I (XIP-I), and by proteinaceous endoxylanase Triticum aestivum xylanase inhibitors I and II (TAXI-I and TAXI-II).</text>
</comment>
<comment type="biophysicochemical properties">
    <kinetics>
        <Vmax evidence="5 7">2540.0 umol/min/mg enzyme toward birchwood xylan at pH 5.5 and 30 degrees Celsius</Vmax>
        <Vmax evidence="5 7">7190.0 umol/min/mg enzyme toward soluble wheat arabinoxylans at pH 5.5 and 30 degrees Celsius</Vmax>
    </kinetics>
    <phDependence>
        <text evidence="5 7">Optimum pH is 5.0.</text>
    </phDependence>
    <temperatureDependence>
        <text evidence="5 7">Optimum temperature is 55 degrees Celsius.</text>
    </temperatureDependence>
</comment>
<comment type="pathway">
    <text>Glycan degradation; xylan degradation.</text>
</comment>
<comment type="subunit">
    <text evidence="6">Interacts directly with the wheat xylanase inhibiting protein I (XIP-I).</text>
</comment>
<comment type="subcellular location">
    <subcellularLocation>
        <location evidence="5">Secreted</location>
    </subcellularLocation>
</comment>
<comment type="similarity">
    <text evidence="8">Belongs to the glycosyl hydrolase 11 (cellulase G) family.</text>
</comment>
<sequence>MKLFLAAIVLCATAATAFPSELAQRAAGDLSKRQSITTSQTGTNNGYYYSFWTNGGGEVTYTNGDNGEYSVTWVDCGDFTSGKGWNPANAQTVTYSGEFNPSGNAYLAVYGWTTDPLVEYYILESYGTYNPSSGLTSLGQVTSDGGTYDIYSTQRVNQPSIEGTSTFNQYWSVRTEKRVGGTVTTANHFAAWKALGLEMGTYNYMIVSTEGYESSGSSTITVS</sequence>
<proteinExistence type="evidence at protein level"/>
<organism>
    <name type="scientific">Talaromyces funiculosus</name>
    <name type="common">Fruitlet core rot fungus</name>
    <name type="synonym">Penicillium funiculosum</name>
    <dbReference type="NCBI Taxonomy" id="28572"/>
    <lineage>
        <taxon>Eukaryota</taxon>
        <taxon>Fungi</taxon>
        <taxon>Dikarya</taxon>
        <taxon>Ascomycota</taxon>
        <taxon>Pezizomycotina</taxon>
        <taxon>Eurotiomycetes</taxon>
        <taxon>Eurotiomycetidae</taxon>
        <taxon>Eurotiales</taxon>
        <taxon>Trichocomaceae</taxon>
        <taxon>Talaromyces</taxon>
        <taxon>Talaromyces sect. Talaromyces</taxon>
    </lineage>
</organism>
<dbReference type="EC" id="3.2.1.8"/>
<dbReference type="EMBL" id="AJ278385">
    <property type="protein sequence ID" value="CAC15487.1"/>
    <property type="molecule type" value="Genomic_DNA"/>
</dbReference>
<dbReference type="PDB" id="1TE1">
    <property type="method" value="X-ray"/>
    <property type="resolution" value="2.50 A"/>
    <property type="chains" value="B=34-223"/>
</dbReference>
<dbReference type="PDB" id="3WP3">
    <property type="method" value="X-ray"/>
    <property type="resolution" value="1.98 A"/>
    <property type="chains" value="A/B=28-223"/>
</dbReference>
<dbReference type="PDBsum" id="1TE1"/>
<dbReference type="PDBsum" id="3WP3"/>
<dbReference type="SMR" id="Q9HFH0"/>
<dbReference type="CAZy" id="GH11">
    <property type="family name" value="Glycoside Hydrolase Family 11"/>
</dbReference>
<dbReference type="BRENDA" id="3.2.1.8">
    <property type="organism ID" value="4616"/>
</dbReference>
<dbReference type="UniPathway" id="UPA00114"/>
<dbReference type="EvolutionaryTrace" id="Q9HFH0"/>
<dbReference type="GO" id="GO:0005576">
    <property type="term" value="C:extracellular region"/>
    <property type="evidence" value="ECO:0007669"/>
    <property type="project" value="UniProtKB-SubCell"/>
</dbReference>
<dbReference type="GO" id="GO:0031176">
    <property type="term" value="F:endo-1,4-beta-xylanase activity"/>
    <property type="evidence" value="ECO:0007669"/>
    <property type="project" value="UniProtKB-EC"/>
</dbReference>
<dbReference type="GO" id="GO:0045493">
    <property type="term" value="P:xylan catabolic process"/>
    <property type="evidence" value="ECO:0007669"/>
    <property type="project" value="UniProtKB-UniPathway"/>
</dbReference>
<dbReference type="FunFam" id="2.60.120.180:FF:000001">
    <property type="entry name" value="Endo-1,4-beta-xylanase"/>
    <property type="match status" value="1"/>
</dbReference>
<dbReference type="Gene3D" id="2.60.120.180">
    <property type="match status" value="1"/>
</dbReference>
<dbReference type="InterPro" id="IPR013320">
    <property type="entry name" value="ConA-like_dom_sf"/>
</dbReference>
<dbReference type="InterPro" id="IPR013319">
    <property type="entry name" value="GH11/12"/>
</dbReference>
<dbReference type="InterPro" id="IPR018208">
    <property type="entry name" value="GH11_AS_1"/>
</dbReference>
<dbReference type="InterPro" id="IPR033123">
    <property type="entry name" value="GH11_dom"/>
</dbReference>
<dbReference type="InterPro" id="IPR001137">
    <property type="entry name" value="Glyco_hydro_11"/>
</dbReference>
<dbReference type="PANTHER" id="PTHR46828">
    <property type="entry name" value="ENDO-1,4-BETA-XYLANASE A-RELATED"/>
    <property type="match status" value="1"/>
</dbReference>
<dbReference type="PANTHER" id="PTHR46828:SF2">
    <property type="entry name" value="ENDO-1,4-BETA-XYLANASE A-RELATED"/>
    <property type="match status" value="1"/>
</dbReference>
<dbReference type="Pfam" id="PF00457">
    <property type="entry name" value="Glyco_hydro_11"/>
    <property type="match status" value="1"/>
</dbReference>
<dbReference type="PRINTS" id="PR00911">
    <property type="entry name" value="GLHYDRLASE11"/>
</dbReference>
<dbReference type="SUPFAM" id="SSF49899">
    <property type="entry name" value="Concanavalin A-like lectins/glucanases"/>
    <property type="match status" value="1"/>
</dbReference>
<dbReference type="PROSITE" id="PS00776">
    <property type="entry name" value="GH11_1"/>
    <property type="match status" value="1"/>
</dbReference>
<dbReference type="PROSITE" id="PS51761">
    <property type="entry name" value="GH11_3"/>
    <property type="match status" value="1"/>
</dbReference>
<accession>Q9HFH0</accession>
<feature type="signal peptide" evidence="2">
    <location>
        <begin position="1"/>
        <end position="17"/>
    </location>
</feature>
<feature type="chain" id="PRO_5000066092" description="Endo-1,4-beta-xylanase C">
    <location>
        <begin position="18"/>
        <end position="223"/>
    </location>
</feature>
<feature type="domain" description="GH11" evidence="3">
    <location>
        <begin position="35"/>
        <end position="223"/>
    </location>
</feature>
<feature type="region of interest" description="Interaction with protein inhibitor XIP-I" evidence="6">
    <location>
        <begin position="5"/>
        <end position="7"/>
    </location>
</feature>
<feature type="region of interest" description="Interaction with protein inhibitor XIP-I" evidence="6">
    <location>
        <begin position="18"/>
        <end position="23"/>
    </location>
</feature>
<feature type="region of interest" description="Interaction with protein inhibitor XIP-I" evidence="6">
    <location>
        <begin position="85"/>
        <end position="87"/>
    </location>
</feature>
<feature type="region of interest" description="Interaction with protein inhibitor XIP-I" evidence="6">
    <location>
        <begin position="123"/>
        <end position="130"/>
    </location>
</feature>
<feature type="active site" description="Nucleophile" evidence="4">
    <location>
        <position position="119"/>
    </location>
</feature>
<feature type="active site" description="Proton donor" evidence="1">
    <location>
        <position position="210"/>
    </location>
</feature>
<feature type="site" description="Interaction with protein inhibitor XIP-I" evidence="6">
    <location>
        <position position="44"/>
    </location>
</feature>
<feature type="site" description="Interaction with protein inhibitor XIP-I" evidence="6">
    <location>
        <position position="170"/>
    </location>
</feature>
<feature type="site" description="Interaction with protein inhibitor XIP-I" evidence="6">
    <location>
        <position position="176"/>
    </location>
</feature>
<feature type="strand" evidence="10">
    <location>
        <begin position="40"/>
        <end position="44"/>
    </location>
</feature>
<feature type="strand" evidence="10">
    <location>
        <begin position="47"/>
        <end position="53"/>
    </location>
</feature>
<feature type="strand" evidence="10">
    <location>
        <begin position="57"/>
        <end position="63"/>
    </location>
</feature>
<feature type="strand" evidence="10">
    <location>
        <begin position="68"/>
        <end position="75"/>
    </location>
</feature>
<feature type="strand" evidence="10">
    <location>
        <begin position="77"/>
        <end position="87"/>
    </location>
</feature>
<feature type="strand" evidence="10">
    <location>
        <begin position="92"/>
        <end position="114"/>
    </location>
</feature>
<feature type="turn" evidence="10">
    <location>
        <begin position="115"/>
        <end position="117"/>
    </location>
</feature>
<feature type="strand" evidence="10">
    <location>
        <begin position="118"/>
        <end position="128"/>
    </location>
</feature>
<feature type="turn" evidence="10">
    <location>
        <begin position="131"/>
        <end position="134"/>
    </location>
</feature>
<feature type="strand" evidence="10">
    <location>
        <begin position="135"/>
        <end position="143"/>
    </location>
</feature>
<feature type="strand" evidence="10">
    <location>
        <begin position="146"/>
        <end position="158"/>
    </location>
</feature>
<feature type="strand" evidence="10">
    <location>
        <begin position="163"/>
        <end position="176"/>
    </location>
</feature>
<feature type="strand" evidence="10">
    <location>
        <begin position="179"/>
        <end position="184"/>
    </location>
</feature>
<feature type="helix" evidence="10">
    <location>
        <begin position="185"/>
        <end position="194"/>
    </location>
</feature>
<feature type="strand" evidence="10">
    <location>
        <begin position="201"/>
        <end position="213"/>
    </location>
</feature>
<feature type="strand" evidence="10">
    <location>
        <begin position="216"/>
        <end position="223"/>
    </location>
</feature>
<reference key="1">
    <citation type="journal article" date="2002" name="Biochim. Biophys. Acta">
        <title>A family 11 xylanase from Penicillium funiculosum is strongly inhibited by three wheat xylanase inhibitors.</title>
        <authorList>
            <person name="Furniss C.S."/>
            <person name="Belshaw N.J."/>
            <person name="Alcocer M.J."/>
            <person name="Williamson G."/>
            <person name="Elliott G.O."/>
            <person name="Gebruers K."/>
            <person name="Haigh N.P."/>
            <person name="Fish N.M."/>
            <person name="Kroon P.A."/>
        </authorList>
    </citation>
    <scope>NUCLEOTIDE SEQUENCE [GENOMIC DNA]</scope>
    <scope>SUBCELLULAR LOCATION</scope>
    <scope>CATALYTIC ACTIVITY</scope>
    <scope>BIOPHYSICOCHEMICAL PROPERTIES</scope>
    <scope>ACTIVITY REGULATION</scope>
</reference>
<reference key="2">
    <citation type="journal article" date="2007" name="Appl. Microbiol. Biotechnol.">
        <title>Substrate and product hydrolysis specificity in family 11 glycoside hydrolases: an analysis of Penicillium funiculosum and Penicillium griseofulvum xylanases.</title>
        <authorList>
            <person name="Berrin J.G."/>
            <person name="Ajandouz el H."/>
            <person name="Georis J."/>
            <person name="Arnaut F."/>
            <person name="Juge N."/>
        </authorList>
    </citation>
    <scope>CATALYTIC ACTIVITY</scope>
    <scope>BIOPHYSICOCHEMICAL PROPERTIES</scope>
    <scope>ACTIVITY REGULATION</scope>
</reference>
<reference evidence="9" key="3">
    <citation type="journal article" date="2004" name="J. Biol. Chem.">
        <title>The dual nature of the wheat xylanase protein inhibitor XIP-I: structural basis for the inhibition of family 10 and family 11 xylanases.</title>
        <authorList>
            <person name="Payan F."/>
            <person name="Leone P."/>
            <person name="Porciero S."/>
            <person name="Furniss C."/>
            <person name="Tahir T."/>
            <person name="Williamson G."/>
            <person name="Durand A."/>
            <person name="Manzanares P."/>
            <person name="Gilbert H.J."/>
            <person name="Juge N."/>
            <person name="Roussel A."/>
        </authorList>
    </citation>
    <scope>X-RAY CRYSTALLOGRAPHY (2.50 ANGSTROMS) OF 34-223 IN COMPLEX WITH INHIBITOR XIP-I</scope>
</reference>
<gene>
    <name type="primary">xynC</name>
</gene>
<keyword id="KW-0002">3D-structure</keyword>
<keyword id="KW-0119">Carbohydrate metabolism</keyword>
<keyword id="KW-0326">Glycosidase</keyword>
<keyword id="KW-0378">Hydrolase</keyword>
<keyword id="KW-0624">Polysaccharide degradation</keyword>
<keyword id="KW-0964">Secreted</keyword>
<keyword id="KW-0732">Signal</keyword>
<keyword id="KW-0858">Xylan degradation</keyword>
<protein>
    <recommendedName>
        <fullName>Endo-1,4-beta-xylanase C</fullName>
        <shortName>Xylanase C</shortName>
        <ecNumber>3.2.1.8</ecNumber>
    </recommendedName>
    <alternativeName>
        <fullName>1,4-beta-D-xylan xylanohydrolase C</fullName>
    </alternativeName>
</protein>